<proteinExistence type="evidence at transcript level"/>
<keyword id="KW-0007">Acetylation</keyword>
<keyword id="KW-0963">Cytoplasm</keyword>
<keyword id="KW-0342">GTP-binding</keyword>
<keyword id="KW-0378">Hydrolase</keyword>
<keyword id="KW-0379">Hydroxylation</keyword>
<keyword id="KW-0460">Magnesium</keyword>
<keyword id="KW-0479">Metal-binding</keyword>
<keyword id="KW-0547">Nucleotide-binding</keyword>
<keyword id="KW-0539">Nucleus</keyword>
<keyword id="KW-0597">Phosphoprotein</keyword>
<keyword id="KW-1185">Reference proteome</keyword>
<keyword id="KW-0832">Ubl conjugation</keyword>
<reference key="1">
    <citation type="submission" date="2005-09" db="EMBL/GenBank/DDBJ databases">
        <authorList>
            <consortium name="NIH - Mammalian Gene Collection (MGC) project"/>
        </authorList>
    </citation>
    <scope>NUCLEOTIDE SEQUENCE [LARGE SCALE MRNA]</scope>
    <source>
        <strain>Crossbred X Angus</strain>
        <tissue>Liver</tissue>
    </source>
</reference>
<sequence>MSSTLAKIAEIEAEMARTQKNKATAHHLGLLKARLAKLRRELITPKGGGGGGPGEGFDVAKTGDARIGFVGFPSVGKSTLLSNLAGVYSEVAAYEFTTLTTVPGVIRYKGAKIQLLDLPGIIEGAKDGKGRGRQVIAVARTCNLILIVLDVLKPLGHKKIIENELEGFGIRLNSKPPNIGFKKKDKGGINLTATCPQSELDAETVKSILAEYKIHNADVTLRSDATADDLIDVVEGNRVYIPCIYVLNKIDQISIEELDIIYKVPHCVPISAHHRWNFDDLLEKIWDYLKLVRIYTKPKGQLPDYTSPVVLPYSRTTVEDFCMKIHKNLIKEFKYALVWGLSVKHNPQKVGKDHTLEDEDVIQIVKK</sequence>
<organism>
    <name type="scientific">Bos taurus</name>
    <name type="common">Bovine</name>
    <dbReference type="NCBI Taxonomy" id="9913"/>
    <lineage>
        <taxon>Eukaryota</taxon>
        <taxon>Metazoa</taxon>
        <taxon>Chordata</taxon>
        <taxon>Craniata</taxon>
        <taxon>Vertebrata</taxon>
        <taxon>Euteleostomi</taxon>
        <taxon>Mammalia</taxon>
        <taxon>Eutheria</taxon>
        <taxon>Laurasiatheria</taxon>
        <taxon>Artiodactyla</taxon>
        <taxon>Ruminantia</taxon>
        <taxon>Pecora</taxon>
        <taxon>Bovidae</taxon>
        <taxon>Bovinae</taxon>
        <taxon>Bos</taxon>
    </lineage>
</organism>
<feature type="initiator methionine" description="Removed" evidence="2">
    <location>
        <position position="1"/>
    </location>
</feature>
<feature type="chain" id="PRO_0000261587" description="Developmentally-regulated GTP-binding protein 1">
    <location>
        <begin position="2"/>
        <end position="367"/>
    </location>
</feature>
<feature type="domain" description="OBG-type G" evidence="3">
    <location>
        <begin position="65"/>
        <end position="290"/>
    </location>
</feature>
<feature type="domain" description="TGS" evidence="4">
    <location>
        <begin position="290"/>
        <end position="366"/>
    </location>
</feature>
<feature type="region of interest" description="Required for interaction with STK16" evidence="2">
    <location>
        <begin position="2"/>
        <end position="16"/>
    </location>
</feature>
<feature type="binding site" evidence="3">
    <location>
        <begin position="71"/>
        <end position="78"/>
    </location>
    <ligand>
        <name>GTP</name>
        <dbReference type="ChEBI" id="CHEBI:37565"/>
    </ligand>
</feature>
<feature type="binding site" evidence="3">
    <location>
        <position position="78"/>
    </location>
    <ligand>
        <name>Mg(2+)</name>
        <dbReference type="ChEBI" id="CHEBI:18420"/>
    </ligand>
</feature>
<feature type="binding site" evidence="3">
    <location>
        <begin position="96"/>
        <end position="100"/>
    </location>
    <ligand>
        <name>GTP</name>
        <dbReference type="ChEBI" id="CHEBI:37565"/>
    </ligand>
</feature>
<feature type="binding site" evidence="3">
    <location>
        <position position="98"/>
    </location>
    <ligand>
        <name>Mg(2+)</name>
        <dbReference type="ChEBI" id="CHEBI:18420"/>
    </ligand>
</feature>
<feature type="binding site" evidence="3">
    <location>
        <begin position="117"/>
        <end position="120"/>
    </location>
    <ligand>
        <name>GTP</name>
        <dbReference type="ChEBI" id="CHEBI:37565"/>
    </ligand>
</feature>
<feature type="binding site" evidence="3">
    <location>
        <begin position="248"/>
        <end position="251"/>
    </location>
    <ligand>
        <name>GTP</name>
        <dbReference type="ChEBI" id="CHEBI:37565"/>
    </ligand>
</feature>
<feature type="binding site" evidence="3">
    <location>
        <begin position="271"/>
        <end position="273"/>
    </location>
    <ligand>
        <name>GTP</name>
        <dbReference type="ChEBI" id="CHEBI:37565"/>
    </ligand>
</feature>
<feature type="modified residue" description="N-acetylserine" evidence="2">
    <location>
        <position position="2"/>
    </location>
</feature>
<feature type="modified residue" description="(3S)-3-hydroxylysine" evidence="2">
    <location>
        <position position="22"/>
    </location>
</feature>
<feature type="modified residue" description="Phosphothreonine; by STK16" evidence="2">
    <location>
        <position position="100"/>
    </location>
</feature>
<protein>
    <recommendedName>
        <fullName>Developmentally-regulated GTP-binding protein 1</fullName>
        <shortName>DRG-1</shortName>
    </recommendedName>
    <alternativeName>
        <fullName>Neural precursor cell expressed developmentally down-regulated protein 3</fullName>
        <shortName>NEDD-3</shortName>
    </alternativeName>
    <alternativeName>
        <fullName>Translation factor GTPase DRG1</fullName>
        <shortName>TRAFAC GTPase DRG1</shortName>
        <ecNumber evidence="2">3.6.5.-</ecNumber>
    </alternativeName>
</protein>
<name>DRG1_BOVIN</name>
<comment type="function">
    <text evidence="2">Catalyzes the conversion of GTP to GDP through hydrolysis of the gamma-phosphate bond in GTP. Appears to have an intrinsic GTPase activity that is stimulated by ZC3H15/DFRP1 binding likely by increasing the affinity for the potassium ions. When hydroxylated at C-3 of 'Lys-22' by JMJD7, may bind to RNA and play a role in translation. Binds to microtubules and promotes microtubule polymerization and bundling that are required for mitotic spindle assembly during prophase to anaphase transition. GTPase activity is not necessary for these microtubule-related functions.</text>
</comment>
<comment type="catalytic activity">
    <reaction evidence="2">
        <text>GTP + H2O = GDP + phosphate + H(+)</text>
        <dbReference type="Rhea" id="RHEA:19669"/>
        <dbReference type="ChEBI" id="CHEBI:15377"/>
        <dbReference type="ChEBI" id="CHEBI:15378"/>
        <dbReference type="ChEBI" id="CHEBI:37565"/>
        <dbReference type="ChEBI" id="CHEBI:43474"/>
        <dbReference type="ChEBI" id="CHEBI:58189"/>
    </reaction>
</comment>
<comment type="activity regulation">
    <text evidence="2">The GTPase activity is enhanced by potassium ions as well as by DFRP1 binding.</text>
</comment>
<comment type="subunit">
    <text evidence="1 2">Interacts (via its C-terminal) with TAL1. Interacts with DFRP1/ZC3H15; this interaction prevents DRG1 poly-ubiquitination and degradation by proteasome. DRG1-ZC3H15/DFRP1 complex co-sediments with polysomes. Interacts with STK16. Interacts with JMJD7.</text>
</comment>
<comment type="subcellular location">
    <subcellularLocation>
        <location evidence="2">Nucleus</location>
    </subcellularLocation>
    <subcellularLocation>
        <location evidence="2">Cytoplasm</location>
    </subcellularLocation>
    <text evidence="2">The DRG1-ZC3H15/DFRP1 complex associates with polysomes.</text>
</comment>
<comment type="domain">
    <text evidence="2">The ThrRS, GTPase, SpoT (TGS) domain is not necessary for GTP binding nor for the GTPase activity. It appears to play a regulatory role favoring GTP hydrolysis mediated by DFRP1/ZC3H15.</text>
</comment>
<comment type="PTM">
    <text evidence="2">Sumoylated by UBE2I in response to MEKK1-mediated stimuli.</text>
</comment>
<comment type="PTM">
    <text evidence="2">Hydroxylated (with S stereochemistry) at C-3 of Lys-22 by JMJD7.</text>
</comment>
<comment type="PTM">
    <text evidence="2">Phosphorylated at Thr-100 by STK16.</text>
</comment>
<comment type="PTM">
    <text evidence="2">Polyubiquitinated; this modification induces proteolytic degradation and is impaired by interaction with ZC3H15.</text>
</comment>
<comment type="similarity">
    <text evidence="3">Belongs to the TRAFAC class OBG-HflX-like GTPase superfamily. OBG GTPase family.</text>
</comment>
<accession>Q3MHP5</accession>
<gene>
    <name type="primary">DRG1</name>
</gene>
<evidence type="ECO:0000250" key="1"/>
<evidence type="ECO:0000250" key="2">
    <source>
        <dbReference type="UniProtKB" id="Q9Y295"/>
    </source>
</evidence>
<evidence type="ECO:0000255" key="3">
    <source>
        <dbReference type="PROSITE-ProRule" id="PRU01047"/>
    </source>
</evidence>
<evidence type="ECO:0000255" key="4">
    <source>
        <dbReference type="PROSITE-ProRule" id="PRU01228"/>
    </source>
</evidence>
<dbReference type="EC" id="3.6.5.-" evidence="2"/>
<dbReference type="EMBL" id="BC105158">
    <property type="protein sequence ID" value="AAI05159.1"/>
    <property type="molecule type" value="mRNA"/>
</dbReference>
<dbReference type="RefSeq" id="NP_001029863.1">
    <property type="nucleotide sequence ID" value="NM_001034691.1"/>
</dbReference>
<dbReference type="BMRB" id="Q3MHP5"/>
<dbReference type="SMR" id="Q3MHP5"/>
<dbReference type="FunCoup" id="Q3MHP5">
    <property type="interactions" value="4793"/>
</dbReference>
<dbReference type="STRING" id="9913.ENSBTAP00000011834"/>
<dbReference type="PaxDb" id="9913-ENSBTAP00000011834"/>
<dbReference type="PeptideAtlas" id="Q3MHP5"/>
<dbReference type="GeneID" id="540161"/>
<dbReference type="KEGG" id="bta:540161"/>
<dbReference type="CTD" id="4733"/>
<dbReference type="VEuPathDB" id="HostDB:ENSBTAG00000008990"/>
<dbReference type="eggNOG" id="KOG1487">
    <property type="taxonomic scope" value="Eukaryota"/>
</dbReference>
<dbReference type="HOGENOM" id="CLU_044997_0_0_1"/>
<dbReference type="InParanoid" id="Q3MHP5"/>
<dbReference type="OMA" id="SAKHPGQ"/>
<dbReference type="OrthoDB" id="603at2759"/>
<dbReference type="TreeFam" id="TF105677"/>
<dbReference type="Reactome" id="R-BTA-9629569">
    <property type="pathway name" value="Protein hydroxylation"/>
</dbReference>
<dbReference type="Proteomes" id="UP000009136">
    <property type="component" value="Chromosome 17"/>
</dbReference>
<dbReference type="Bgee" id="ENSBTAG00000008990">
    <property type="expression patterns" value="Expressed in spermatocyte and 106 other cell types or tissues"/>
</dbReference>
<dbReference type="GO" id="GO:0005737">
    <property type="term" value="C:cytoplasm"/>
    <property type="evidence" value="ECO:0000318"/>
    <property type="project" value="GO_Central"/>
</dbReference>
<dbReference type="GO" id="GO:0005634">
    <property type="term" value="C:nucleus"/>
    <property type="evidence" value="ECO:0007669"/>
    <property type="project" value="UniProtKB-SubCell"/>
</dbReference>
<dbReference type="GO" id="GO:0005525">
    <property type="term" value="F:GTP binding"/>
    <property type="evidence" value="ECO:0000318"/>
    <property type="project" value="GO_Central"/>
</dbReference>
<dbReference type="GO" id="GO:0003924">
    <property type="term" value="F:GTPase activity"/>
    <property type="evidence" value="ECO:0007669"/>
    <property type="project" value="InterPro"/>
</dbReference>
<dbReference type="GO" id="GO:0046872">
    <property type="term" value="F:metal ion binding"/>
    <property type="evidence" value="ECO:0007669"/>
    <property type="project" value="UniProtKB-KW"/>
</dbReference>
<dbReference type="GO" id="GO:0008017">
    <property type="term" value="F:microtubule binding"/>
    <property type="evidence" value="ECO:0000250"/>
    <property type="project" value="UniProtKB"/>
</dbReference>
<dbReference type="GO" id="GO:0002181">
    <property type="term" value="P:cytoplasmic translation"/>
    <property type="evidence" value="ECO:0000318"/>
    <property type="project" value="GO_Central"/>
</dbReference>
<dbReference type="GO" id="GO:0031116">
    <property type="term" value="P:positive regulation of microtubule polymerization"/>
    <property type="evidence" value="ECO:0000250"/>
    <property type="project" value="UniProtKB"/>
</dbReference>
<dbReference type="GO" id="GO:1901673">
    <property type="term" value="P:regulation of mitotic spindle assembly"/>
    <property type="evidence" value="ECO:0000250"/>
    <property type="project" value="UniProtKB"/>
</dbReference>
<dbReference type="CDD" id="cd01896">
    <property type="entry name" value="DRG"/>
    <property type="match status" value="1"/>
</dbReference>
<dbReference type="CDD" id="cd17230">
    <property type="entry name" value="TGS_DRG1"/>
    <property type="match status" value="1"/>
</dbReference>
<dbReference type="FunFam" id="3.10.20.30:FF:000003">
    <property type="entry name" value="Developmentally-regulated GTP-binding protein 1"/>
    <property type="match status" value="1"/>
</dbReference>
<dbReference type="FunFam" id="3.40.50.300:FF:002634">
    <property type="entry name" value="Small GTP-binding protein"/>
    <property type="match status" value="1"/>
</dbReference>
<dbReference type="Gene3D" id="3.10.20.30">
    <property type="match status" value="1"/>
</dbReference>
<dbReference type="Gene3D" id="6.10.140.1070">
    <property type="match status" value="2"/>
</dbReference>
<dbReference type="InterPro" id="IPR012675">
    <property type="entry name" value="Beta-grasp_dom_sf"/>
</dbReference>
<dbReference type="InterPro" id="IPR045001">
    <property type="entry name" value="DRG"/>
</dbReference>
<dbReference type="InterPro" id="IPR031167">
    <property type="entry name" value="G_OBG"/>
</dbReference>
<dbReference type="InterPro" id="IPR006073">
    <property type="entry name" value="GTP-bd"/>
</dbReference>
<dbReference type="InterPro" id="IPR031662">
    <property type="entry name" value="GTP-binding_2"/>
</dbReference>
<dbReference type="InterPro" id="IPR006074">
    <property type="entry name" value="GTP1-OBG_CS"/>
</dbReference>
<dbReference type="InterPro" id="IPR027417">
    <property type="entry name" value="P-loop_NTPase"/>
</dbReference>
<dbReference type="InterPro" id="IPR005225">
    <property type="entry name" value="Small_GTP-bd"/>
</dbReference>
<dbReference type="InterPro" id="IPR004095">
    <property type="entry name" value="TGS"/>
</dbReference>
<dbReference type="InterPro" id="IPR012676">
    <property type="entry name" value="TGS-like"/>
</dbReference>
<dbReference type="NCBIfam" id="TIGR00231">
    <property type="entry name" value="small_GTP"/>
    <property type="match status" value="1"/>
</dbReference>
<dbReference type="PANTHER" id="PTHR43127">
    <property type="entry name" value="DEVELOPMENTALLY-REGULATED GTP-BINDING PROTEIN 2"/>
    <property type="match status" value="1"/>
</dbReference>
<dbReference type="Pfam" id="PF01926">
    <property type="entry name" value="MMR_HSR1"/>
    <property type="match status" value="1"/>
</dbReference>
<dbReference type="Pfam" id="PF16897">
    <property type="entry name" value="MMR_HSR1_Xtn"/>
    <property type="match status" value="1"/>
</dbReference>
<dbReference type="Pfam" id="PF02824">
    <property type="entry name" value="TGS"/>
    <property type="match status" value="1"/>
</dbReference>
<dbReference type="PRINTS" id="PR00326">
    <property type="entry name" value="GTP1OBG"/>
</dbReference>
<dbReference type="SUPFAM" id="SSF52540">
    <property type="entry name" value="P-loop containing nucleoside triphosphate hydrolases"/>
    <property type="match status" value="1"/>
</dbReference>
<dbReference type="SUPFAM" id="SSF81271">
    <property type="entry name" value="TGS-like"/>
    <property type="match status" value="1"/>
</dbReference>
<dbReference type="PROSITE" id="PS51710">
    <property type="entry name" value="G_OBG"/>
    <property type="match status" value="1"/>
</dbReference>
<dbReference type="PROSITE" id="PS00905">
    <property type="entry name" value="GTP1_OBG"/>
    <property type="match status" value="1"/>
</dbReference>
<dbReference type="PROSITE" id="PS51880">
    <property type="entry name" value="TGS"/>
    <property type="match status" value="1"/>
</dbReference>